<evidence type="ECO:0000250" key="1">
    <source>
        <dbReference type="UniProtKB" id="P0ABP3"/>
    </source>
</evidence>
<evidence type="ECO:0000255" key="2"/>
<evidence type="ECO:0000305" key="3"/>
<proteinExistence type="inferred from homology"/>
<organism>
    <name type="scientific">Escherichia coli O6:H1 (strain CFT073 / ATCC 700928 / UPEC)</name>
    <dbReference type="NCBI Taxonomy" id="199310"/>
    <lineage>
        <taxon>Bacteria</taxon>
        <taxon>Pseudomonadati</taxon>
        <taxon>Pseudomonadota</taxon>
        <taxon>Gammaproteobacteria</taxon>
        <taxon>Enterobacterales</taxon>
        <taxon>Enterobacteriaceae</taxon>
        <taxon>Escherichia</taxon>
    </lineage>
</organism>
<keyword id="KW-0050">Antiport</keyword>
<keyword id="KW-0997">Cell inner membrane</keyword>
<keyword id="KW-1003">Cell membrane</keyword>
<keyword id="KW-0472">Membrane</keyword>
<keyword id="KW-1185">Reference proteome</keyword>
<keyword id="KW-0812">Transmembrane</keyword>
<keyword id="KW-1133">Transmembrane helix</keyword>
<keyword id="KW-0813">Transport</keyword>
<name>DCUC_ECOL6</name>
<accession>Q8FJZ8</accession>
<dbReference type="EMBL" id="AE014075">
    <property type="protein sequence ID" value="AAN79185.1"/>
    <property type="molecule type" value="Genomic_DNA"/>
</dbReference>
<dbReference type="RefSeq" id="WP_000955057.1">
    <property type="nucleotide sequence ID" value="NZ_CP051263.1"/>
</dbReference>
<dbReference type="SMR" id="Q8FJZ8"/>
<dbReference type="STRING" id="199310.c0712"/>
<dbReference type="KEGG" id="ecc:c0712"/>
<dbReference type="eggNOG" id="COG3069">
    <property type="taxonomic scope" value="Bacteria"/>
</dbReference>
<dbReference type="HOGENOM" id="CLU_030262_3_2_6"/>
<dbReference type="BioCyc" id="ECOL199310:C0712-MONOMER"/>
<dbReference type="Proteomes" id="UP000001410">
    <property type="component" value="Chromosome"/>
</dbReference>
<dbReference type="GO" id="GO:0005886">
    <property type="term" value="C:plasma membrane"/>
    <property type="evidence" value="ECO:0007669"/>
    <property type="project" value="UniProtKB-SubCell"/>
</dbReference>
<dbReference type="GO" id="GO:0015297">
    <property type="term" value="F:antiporter activity"/>
    <property type="evidence" value="ECO:0007669"/>
    <property type="project" value="UniProtKB-KW"/>
</dbReference>
<dbReference type="GO" id="GO:0015556">
    <property type="term" value="F:C4-dicarboxylate transmembrane transporter activity"/>
    <property type="evidence" value="ECO:0007669"/>
    <property type="project" value="InterPro"/>
</dbReference>
<dbReference type="InterPro" id="IPR004669">
    <property type="entry name" value="C4_dicarb_anaerob_car"/>
</dbReference>
<dbReference type="InterPro" id="IPR018385">
    <property type="entry name" value="C4_dicarb_anaerob_car-like"/>
</dbReference>
<dbReference type="NCBIfam" id="TIGR00771">
    <property type="entry name" value="DcuC"/>
    <property type="match status" value="1"/>
</dbReference>
<dbReference type="NCBIfam" id="NF037994">
    <property type="entry name" value="DcuC_1"/>
    <property type="match status" value="1"/>
</dbReference>
<dbReference type="NCBIfam" id="NF007937">
    <property type="entry name" value="PRK10654.1"/>
    <property type="match status" value="1"/>
</dbReference>
<dbReference type="PANTHER" id="PTHR42002">
    <property type="entry name" value="ANAEROBIC C4-DICARBOXYLATE TRANSPORTER DCUC-RELATED"/>
    <property type="match status" value="1"/>
</dbReference>
<dbReference type="PANTHER" id="PTHR42002:SF2">
    <property type="entry name" value="ANAEROBIC C4-DICARBOXYLATE TRANSPORTER DCUC-RELATED"/>
    <property type="match status" value="1"/>
</dbReference>
<dbReference type="Pfam" id="PF03606">
    <property type="entry name" value="DcuC"/>
    <property type="match status" value="1"/>
</dbReference>
<feature type="chain" id="PRO_0000201629" description="Anaerobic C4-dicarboxylate transporter DcuC">
    <location>
        <begin position="1"/>
        <end position="461"/>
    </location>
</feature>
<feature type="transmembrane region" description="Helical" evidence="2">
    <location>
        <begin position="2"/>
        <end position="22"/>
    </location>
</feature>
<feature type="transmembrane region" description="Helical" evidence="2">
    <location>
        <begin position="26"/>
        <end position="46"/>
    </location>
</feature>
<feature type="transmembrane region" description="Helical" evidence="2">
    <location>
        <begin position="79"/>
        <end position="99"/>
    </location>
</feature>
<feature type="transmembrane region" description="Helical" evidence="2">
    <location>
        <begin position="116"/>
        <end position="136"/>
    </location>
</feature>
<feature type="transmembrane region" description="Helical" evidence="2">
    <location>
        <begin position="137"/>
        <end position="157"/>
    </location>
</feature>
<feature type="transmembrane region" description="Helical" evidence="2">
    <location>
        <begin position="164"/>
        <end position="184"/>
    </location>
</feature>
<feature type="transmembrane region" description="Helical" evidence="2">
    <location>
        <begin position="199"/>
        <end position="219"/>
    </location>
</feature>
<feature type="transmembrane region" description="Helical" evidence="2">
    <location>
        <begin position="240"/>
        <end position="260"/>
    </location>
</feature>
<feature type="transmembrane region" description="Helical" evidence="2">
    <location>
        <begin position="267"/>
        <end position="287"/>
    </location>
</feature>
<feature type="transmembrane region" description="Helical" evidence="2">
    <location>
        <begin position="313"/>
        <end position="333"/>
    </location>
</feature>
<feature type="transmembrane region" description="Helical" evidence="2">
    <location>
        <begin position="343"/>
        <end position="363"/>
    </location>
</feature>
<feature type="transmembrane region" description="Helical" evidence="2">
    <location>
        <begin position="436"/>
        <end position="456"/>
    </location>
</feature>
<reference key="1">
    <citation type="journal article" date="2002" name="Proc. Natl. Acad. Sci. U.S.A.">
        <title>Extensive mosaic structure revealed by the complete genome sequence of uropathogenic Escherichia coli.</title>
        <authorList>
            <person name="Welch R.A."/>
            <person name="Burland V."/>
            <person name="Plunkett G. III"/>
            <person name="Redford P."/>
            <person name="Roesch P."/>
            <person name="Rasko D."/>
            <person name="Buckles E.L."/>
            <person name="Liou S.-R."/>
            <person name="Boutin A."/>
            <person name="Hackett J."/>
            <person name="Stroud D."/>
            <person name="Mayhew G.F."/>
            <person name="Rose D.J."/>
            <person name="Zhou S."/>
            <person name="Schwartz D.C."/>
            <person name="Perna N.T."/>
            <person name="Mobley H.L.T."/>
            <person name="Donnenberg M.S."/>
            <person name="Blattner F.R."/>
        </authorList>
    </citation>
    <scope>NUCLEOTIDE SEQUENCE [LARGE SCALE GENOMIC DNA]</scope>
    <source>
        <strain>CFT073 / ATCC 700928 / UPEC</strain>
    </source>
</reference>
<protein>
    <recommendedName>
        <fullName evidence="1">Anaerobic C4-dicarboxylate transporter DcuC</fullName>
    </recommendedName>
</protein>
<comment type="function">
    <text evidence="1">Responsible for the transport of C4-dicarboxylates during anaerobic growth. Catalyzes the uptake of fumarate coupled to the export of succinate.</text>
</comment>
<comment type="catalytic activity">
    <reaction evidence="1">
        <text>fumarate(in) + succinate(out) = fumarate(out) + succinate(in)</text>
        <dbReference type="Rhea" id="RHEA:29323"/>
        <dbReference type="ChEBI" id="CHEBI:29806"/>
        <dbReference type="ChEBI" id="CHEBI:30031"/>
    </reaction>
    <physiologicalReaction direction="right-to-left" evidence="1">
        <dbReference type="Rhea" id="RHEA:29325"/>
    </physiologicalReaction>
</comment>
<comment type="subcellular location">
    <subcellularLocation>
        <location evidence="1">Cell inner membrane</location>
        <topology evidence="2">Multi-pass membrane protein</topology>
    </subcellularLocation>
</comment>
<comment type="similarity">
    <text evidence="3">Belongs to the DcuC/DcuD transporter (TC 2.A.61) family.</text>
</comment>
<gene>
    <name type="primary">dcuC</name>
    <name type="ordered locus">c0712</name>
</gene>
<sequence>MLTFIELLIGVVVIVGVARYIIKGYSATGVLFVGGLLLLIISAIMGHKVLPSSQASTGYSATDIVEYVKILLMSRGGDLGMMIMMLCGFAAYMTHIGANDMVVKLASKPLQYINSPYLLMIAAYFVACLMSLAVSSATGLGVLLMATLFPVMVNVGISRGAAAAICASPAAIILAPTSGDVVLAAQASEMSLIDFAFKTTLPISIAAIIGMAIAHFFWQRYLDKKEHISHEMLDVSEITTTAPAFYAILPFTPIIGVLIFDGKWGPQLHIITILVICMLIASILEFIRSFNTQKVFSGLEVAYRGMADAFANVVMLLVAAGVFAQGLSTIGFIQSLISIATSFGSASIILMLVLVILTMLAAVTTGSGNAPFYAFVEMIPKLAHSSGINPAYLTIPMLQASNLGRTLSPVSGVVVAVAGMAKISPFEVVKRTSVPVLVGLVIVIVATELMVPGTAAAVTGK</sequence>